<comment type="function">
    <text evidence="1">Catalyzes the formation of 6,7-dimethyl-8-ribityllumazine by condensation of 5-amino-6-(D-ribitylamino)uracil with 3,4-dihydroxy-2-butanone 4-phosphate. This is the penultimate step in the biosynthesis of riboflavin (By similarity).</text>
</comment>
<comment type="catalytic activity">
    <reaction>
        <text>(2S)-2-hydroxy-3-oxobutyl phosphate + 5-amino-6-(D-ribitylamino)uracil = 6,7-dimethyl-8-(1-D-ribityl)lumazine + phosphate + 2 H2O + H(+)</text>
        <dbReference type="Rhea" id="RHEA:26152"/>
        <dbReference type="ChEBI" id="CHEBI:15377"/>
        <dbReference type="ChEBI" id="CHEBI:15378"/>
        <dbReference type="ChEBI" id="CHEBI:15934"/>
        <dbReference type="ChEBI" id="CHEBI:43474"/>
        <dbReference type="ChEBI" id="CHEBI:58201"/>
        <dbReference type="ChEBI" id="CHEBI:58830"/>
        <dbReference type="EC" id="2.5.1.78"/>
    </reaction>
</comment>
<comment type="pathway">
    <text>Cofactor biosynthesis; riboflavin biosynthesis; riboflavin from 2-hydroxy-3-oxobutyl phosphate and 5-amino-6-(D-ribitylamino)uracil: step 1/2.</text>
</comment>
<comment type="subunit">
    <text evidence="3">Oligomer forming an icosahedral capsid.</text>
</comment>
<comment type="interaction">
    <interactant intactId="EBI-4473692">
        <id>O80575</id>
    </interactant>
    <interactant intactId="EBI-1100737">
        <id>Q8L9Y3</id>
        <label>ARR14</label>
    </interactant>
    <organismsDiffer>false</organismsDiffer>
    <experiments>3</experiments>
</comment>
<comment type="interaction">
    <interactant intactId="EBI-4473692">
        <id>O80575</id>
    </interactant>
    <interactant intactId="EBI-25518185">
        <id>A0A178W6S0</id>
        <label>At1g51090</label>
    </interactant>
    <organismsDiffer>false</organismsDiffer>
    <experiments>3</experiments>
</comment>
<comment type="interaction">
    <interactant intactId="EBI-4473692">
        <id>O80575</id>
    </interactant>
    <interactant intactId="EBI-4473692">
        <id>O80575</id>
        <label>At2g44050</label>
    </interactant>
    <organismsDiffer>false</organismsDiffer>
    <experiments>5</experiments>
</comment>
<comment type="interaction">
    <interactant intactId="EBI-4473692">
        <id>O80575</id>
    </interactant>
    <interactant intactId="EBI-4436207">
        <id>Q9M9W9</id>
        <label>At3g05640</label>
    </interactant>
    <organismsDiffer>false</organismsDiffer>
    <experiments>3</experiments>
</comment>
<comment type="interaction">
    <interactant intactId="EBI-4473692">
        <id>O80575</id>
    </interactant>
    <interactant intactId="EBI-4436982">
        <id>Q9M223</id>
        <label>At3g60360</label>
    </interactant>
    <organismsDiffer>false</organismsDiffer>
    <experiments>3</experiments>
</comment>
<comment type="interaction">
    <interactant intactId="EBI-4473692">
        <id>O80575</id>
    </interactant>
    <interactant intactId="EBI-307576">
        <id>Q9LZW4</id>
        <label>CIPK14</label>
    </interactant>
    <organismsDiffer>false</organismsDiffer>
    <experiments>4</experiments>
</comment>
<comment type="interaction">
    <interactant intactId="EBI-4473692">
        <id>O80575</id>
    </interactant>
    <interactant intactId="EBI-537592">
        <id>P92937</id>
        <label>CIPK15</label>
    </interactant>
    <organismsDiffer>false</organismsDiffer>
    <experiments>3</experiments>
</comment>
<comment type="interaction">
    <interactant intactId="EBI-4473692">
        <id>O80575</id>
    </interactant>
    <interactant intactId="EBI-4453230">
        <id>O80902</id>
        <label>CIPK22</label>
    </interactant>
    <organismsDiffer>false</organismsDiffer>
    <experiments>3</experiments>
</comment>
<comment type="interaction">
    <interactant intactId="EBI-4473692">
        <id>O80575</id>
    </interactant>
    <interactant intactId="EBI-1238377">
        <id>Q84JC2</id>
        <label>DOGL4</label>
    </interactant>
    <organismsDiffer>false</organismsDiffer>
    <experiments>3</experiments>
</comment>
<comment type="interaction">
    <interactant intactId="EBI-4473692">
        <id>O80575</id>
    </interactant>
    <interactant intactId="EBI-1633812">
        <id>Q42404</id>
        <label>RNU1</label>
    </interactant>
    <organismsDiffer>false</organismsDiffer>
    <experiments>3</experiments>
</comment>
<comment type="interaction">
    <interactant intactId="EBI-4473692">
        <id>O80575</id>
    </interactant>
    <interactant intactId="EBI-4446419">
        <id>Q93WE4</id>
        <label>SINAT6</label>
    </interactant>
    <organismsDiffer>false</organismsDiffer>
    <experiments>3</experiments>
</comment>
<comment type="interaction">
    <interactant intactId="EBI-4473692">
        <id>O80575</id>
    </interactant>
    <interactant intactId="EBI-4434999">
        <id>Q9FJJ3</id>
        <label>SRO5</label>
    </interactant>
    <organismsDiffer>false</organismsDiffer>
    <experiments>3</experiments>
</comment>
<comment type="interaction">
    <interactant intactId="EBI-4473692">
        <id>O80575</id>
    </interactant>
    <interactant intactId="EBI-4424123">
        <id>Q0WT24</id>
        <label>STOP2</label>
    </interactant>
    <organismsDiffer>false</organismsDiffer>
    <experiments>3</experiments>
</comment>
<comment type="interaction">
    <interactant intactId="EBI-4473692">
        <id>O80575</id>
    </interactant>
    <interactant intactId="EBI-2365037">
        <id>Q9SJA8</id>
        <label>WRKY17</label>
    </interactant>
    <organismsDiffer>false</organismsDiffer>
    <experiments>5</experiments>
</comment>
<comment type="interaction">
    <interactant intactId="EBI-4473692">
        <id>O80575</id>
    </interactant>
    <interactant intactId="EBI-1239118">
        <id>O04336</id>
        <label>WRKY21</label>
    </interactant>
    <organismsDiffer>false</organismsDiffer>
    <experiments>3</experiments>
</comment>
<comment type="subcellular location">
    <subcellularLocation>
        <location>Plastid</location>
        <location>Chloroplast</location>
    </subcellularLocation>
</comment>
<comment type="similarity">
    <text evidence="3">Belongs to the DMRL synthase family.</text>
</comment>
<dbReference type="EC" id="2.5.1.78"/>
<dbReference type="EMBL" id="AF148649">
    <property type="protein sequence ID" value="AAD44810.1"/>
    <property type="molecule type" value="mRNA"/>
</dbReference>
<dbReference type="EMBL" id="AC004005">
    <property type="protein sequence ID" value="AAC23413.1"/>
    <property type="molecule type" value="Genomic_DNA"/>
</dbReference>
<dbReference type="EMBL" id="CP002685">
    <property type="protein sequence ID" value="AEC10365.1"/>
    <property type="molecule type" value="Genomic_DNA"/>
</dbReference>
<dbReference type="EMBL" id="AY050913">
    <property type="protein sequence ID" value="AAK93590.1"/>
    <property type="molecule type" value="mRNA"/>
</dbReference>
<dbReference type="EMBL" id="AY091343">
    <property type="protein sequence ID" value="AAM14282.1"/>
    <property type="molecule type" value="mRNA"/>
</dbReference>
<dbReference type="PIR" id="T00685">
    <property type="entry name" value="T00685"/>
</dbReference>
<dbReference type="SMR" id="O80575"/>
<dbReference type="BioGRID" id="4346">
    <property type="interactions" value="16"/>
</dbReference>
<dbReference type="FunCoup" id="O80575">
    <property type="interactions" value="1202"/>
</dbReference>
<dbReference type="IntAct" id="O80575">
    <property type="interactions" value="15"/>
</dbReference>
<dbReference type="STRING" id="3702.O80575"/>
<dbReference type="PaxDb" id="3702-AT2G44050.1"/>
<dbReference type="ProteomicsDB" id="236951"/>
<dbReference type="EnsemblPlants" id="AT2G44050.1">
    <property type="protein sequence ID" value="AT2G44050.1"/>
    <property type="gene ID" value="AT2G44050"/>
</dbReference>
<dbReference type="GeneID" id="819010"/>
<dbReference type="Gramene" id="AT2G44050.1">
    <property type="protein sequence ID" value="AT2G44050.1"/>
    <property type="gene ID" value="AT2G44050"/>
</dbReference>
<dbReference type="KEGG" id="ath:AT2G44050"/>
<dbReference type="Araport" id="AT2G44050"/>
<dbReference type="TAIR" id="AT2G44050">
    <property type="gene designation" value="COS1"/>
</dbReference>
<dbReference type="eggNOG" id="KOG3243">
    <property type="taxonomic scope" value="Eukaryota"/>
</dbReference>
<dbReference type="HOGENOM" id="CLU_089358_4_0_1"/>
<dbReference type="InParanoid" id="O80575"/>
<dbReference type="OMA" id="CQGVTQG"/>
<dbReference type="OrthoDB" id="2965at2759"/>
<dbReference type="PhylomeDB" id="O80575"/>
<dbReference type="BioCyc" id="ARA:AT2G44050-MONOMER"/>
<dbReference type="BioCyc" id="MetaCyc:AT2G44050-MONOMER"/>
<dbReference type="BRENDA" id="2.5.1.78">
    <property type="organism ID" value="399"/>
</dbReference>
<dbReference type="UniPathway" id="UPA00275">
    <property type="reaction ID" value="UER00404"/>
</dbReference>
<dbReference type="PRO" id="PR:O80575"/>
<dbReference type="Proteomes" id="UP000006548">
    <property type="component" value="Chromosome 2"/>
</dbReference>
<dbReference type="ExpressionAtlas" id="O80575">
    <property type="expression patterns" value="baseline and differential"/>
</dbReference>
<dbReference type="GO" id="GO:0009507">
    <property type="term" value="C:chloroplast"/>
    <property type="evidence" value="ECO:0007005"/>
    <property type="project" value="TAIR"/>
</dbReference>
<dbReference type="GO" id="GO:0009570">
    <property type="term" value="C:chloroplast stroma"/>
    <property type="evidence" value="ECO:0007005"/>
    <property type="project" value="TAIR"/>
</dbReference>
<dbReference type="GO" id="GO:0009349">
    <property type="term" value="C:riboflavin synthase complex"/>
    <property type="evidence" value="ECO:0007669"/>
    <property type="project" value="InterPro"/>
</dbReference>
<dbReference type="GO" id="GO:0000906">
    <property type="term" value="F:6,7-dimethyl-8-ribityllumazine synthase activity"/>
    <property type="evidence" value="ECO:0007669"/>
    <property type="project" value="UniProtKB-EC"/>
</dbReference>
<dbReference type="GO" id="GO:0042802">
    <property type="term" value="F:identical protein binding"/>
    <property type="evidence" value="ECO:0000353"/>
    <property type="project" value="IntAct"/>
</dbReference>
<dbReference type="GO" id="GO:0009231">
    <property type="term" value="P:riboflavin biosynthetic process"/>
    <property type="evidence" value="ECO:0007669"/>
    <property type="project" value="UniProtKB-UniPathway"/>
</dbReference>
<dbReference type="CDD" id="cd09209">
    <property type="entry name" value="Lumazine_synthase-I"/>
    <property type="match status" value="1"/>
</dbReference>
<dbReference type="FunFam" id="3.40.50.960:FF:000001">
    <property type="entry name" value="6,7-dimethyl-8-ribityllumazine synthase"/>
    <property type="match status" value="1"/>
</dbReference>
<dbReference type="Gene3D" id="3.40.50.960">
    <property type="entry name" value="Lumazine/riboflavin synthase"/>
    <property type="match status" value="1"/>
</dbReference>
<dbReference type="HAMAP" id="MF_00178">
    <property type="entry name" value="Lumazine_synth"/>
    <property type="match status" value="1"/>
</dbReference>
<dbReference type="InterPro" id="IPR017420">
    <property type="entry name" value="DMRL_synthase_chloroplast"/>
</dbReference>
<dbReference type="InterPro" id="IPR034964">
    <property type="entry name" value="LS"/>
</dbReference>
<dbReference type="InterPro" id="IPR002180">
    <property type="entry name" value="LS/RS"/>
</dbReference>
<dbReference type="InterPro" id="IPR036467">
    <property type="entry name" value="LS/RS_sf"/>
</dbReference>
<dbReference type="NCBIfam" id="TIGR00114">
    <property type="entry name" value="lumazine-synth"/>
    <property type="match status" value="1"/>
</dbReference>
<dbReference type="PANTHER" id="PTHR21058:SF0">
    <property type="entry name" value="6,7-DIMETHYL-8-RIBITYLLUMAZINE SYNTHASE"/>
    <property type="match status" value="1"/>
</dbReference>
<dbReference type="PANTHER" id="PTHR21058">
    <property type="entry name" value="6,7-DIMETHYL-8-RIBITYLLUMAZINE SYNTHASE DMRL SYNTHASE LUMAZINE SYNTHASE"/>
    <property type="match status" value="1"/>
</dbReference>
<dbReference type="Pfam" id="PF00885">
    <property type="entry name" value="DMRL_synthase"/>
    <property type="match status" value="1"/>
</dbReference>
<dbReference type="PIRSF" id="PIRSF038166">
    <property type="entry name" value="DMRL_synthase_cp"/>
    <property type="match status" value="1"/>
</dbReference>
<dbReference type="SUPFAM" id="SSF52121">
    <property type="entry name" value="Lumazine synthase"/>
    <property type="match status" value="1"/>
</dbReference>
<accession>O80575</accession>
<reference key="1">
    <citation type="journal article" date="1999" name="J. Biol. Chem.">
        <title>Plant riboflavin biosynthesis. Cloning, chloroplast localization, expression, purification, and partial characterization of spinach lumazine synthase.</title>
        <authorList>
            <person name="Jordan D.B."/>
            <person name="Bacot K.O."/>
            <person name="Carlson T.J."/>
            <person name="Kessel M."/>
            <person name="Viitanen P.V."/>
        </authorList>
    </citation>
    <scope>NUCLEOTIDE SEQUENCE [MRNA]</scope>
</reference>
<reference key="2">
    <citation type="journal article" date="1999" name="Nature">
        <title>Sequence and analysis of chromosome 2 of the plant Arabidopsis thaliana.</title>
        <authorList>
            <person name="Lin X."/>
            <person name="Kaul S."/>
            <person name="Rounsley S.D."/>
            <person name="Shea T.P."/>
            <person name="Benito M.-I."/>
            <person name="Town C.D."/>
            <person name="Fujii C.Y."/>
            <person name="Mason T.M."/>
            <person name="Bowman C.L."/>
            <person name="Barnstead M.E."/>
            <person name="Feldblyum T.V."/>
            <person name="Buell C.R."/>
            <person name="Ketchum K.A."/>
            <person name="Lee J.J."/>
            <person name="Ronning C.M."/>
            <person name="Koo H.L."/>
            <person name="Moffat K.S."/>
            <person name="Cronin L.A."/>
            <person name="Shen M."/>
            <person name="Pai G."/>
            <person name="Van Aken S."/>
            <person name="Umayam L."/>
            <person name="Tallon L.J."/>
            <person name="Gill J.E."/>
            <person name="Adams M.D."/>
            <person name="Carrera A.J."/>
            <person name="Creasy T.H."/>
            <person name="Goodman H.M."/>
            <person name="Somerville C.R."/>
            <person name="Copenhaver G.P."/>
            <person name="Preuss D."/>
            <person name="Nierman W.C."/>
            <person name="White O."/>
            <person name="Eisen J.A."/>
            <person name="Salzberg S.L."/>
            <person name="Fraser C.M."/>
            <person name="Venter J.C."/>
        </authorList>
    </citation>
    <scope>NUCLEOTIDE SEQUENCE [LARGE SCALE GENOMIC DNA]</scope>
    <source>
        <strain>cv. Columbia</strain>
    </source>
</reference>
<reference key="3">
    <citation type="journal article" date="2017" name="Plant J.">
        <title>Araport11: a complete reannotation of the Arabidopsis thaliana reference genome.</title>
        <authorList>
            <person name="Cheng C.Y."/>
            <person name="Krishnakumar V."/>
            <person name="Chan A.P."/>
            <person name="Thibaud-Nissen F."/>
            <person name="Schobel S."/>
            <person name="Town C.D."/>
        </authorList>
    </citation>
    <scope>GENOME REANNOTATION</scope>
    <source>
        <strain>cv. Columbia</strain>
    </source>
</reference>
<reference key="4">
    <citation type="journal article" date="2003" name="Science">
        <title>Empirical analysis of transcriptional activity in the Arabidopsis genome.</title>
        <authorList>
            <person name="Yamada K."/>
            <person name="Lim J."/>
            <person name="Dale J.M."/>
            <person name="Chen H."/>
            <person name="Shinn P."/>
            <person name="Palm C.J."/>
            <person name="Southwick A.M."/>
            <person name="Wu H.C."/>
            <person name="Kim C.J."/>
            <person name="Nguyen M."/>
            <person name="Pham P.K."/>
            <person name="Cheuk R.F."/>
            <person name="Karlin-Newmann G."/>
            <person name="Liu S.X."/>
            <person name="Lam B."/>
            <person name="Sakano H."/>
            <person name="Wu T."/>
            <person name="Yu G."/>
            <person name="Miranda M."/>
            <person name="Quach H.L."/>
            <person name="Tripp M."/>
            <person name="Chang C.H."/>
            <person name="Lee J.M."/>
            <person name="Toriumi M.J."/>
            <person name="Chan M.M."/>
            <person name="Tang C.C."/>
            <person name="Onodera C.S."/>
            <person name="Deng J.M."/>
            <person name="Akiyama K."/>
            <person name="Ansari Y."/>
            <person name="Arakawa T."/>
            <person name="Banh J."/>
            <person name="Banno F."/>
            <person name="Bowser L."/>
            <person name="Brooks S.Y."/>
            <person name="Carninci P."/>
            <person name="Chao Q."/>
            <person name="Choy N."/>
            <person name="Enju A."/>
            <person name="Goldsmith A.D."/>
            <person name="Gurjal M."/>
            <person name="Hansen N.F."/>
            <person name="Hayashizaki Y."/>
            <person name="Johnson-Hopson C."/>
            <person name="Hsuan V.W."/>
            <person name="Iida K."/>
            <person name="Karnes M."/>
            <person name="Khan S."/>
            <person name="Koesema E."/>
            <person name="Ishida J."/>
            <person name="Jiang P.X."/>
            <person name="Jones T."/>
            <person name="Kawai J."/>
            <person name="Kamiya A."/>
            <person name="Meyers C."/>
            <person name="Nakajima M."/>
            <person name="Narusaka M."/>
            <person name="Seki M."/>
            <person name="Sakurai T."/>
            <person name="Satou M."/>
            <person name="Tamse R."/>
            <person name="Vaysberg M."/>
            <person name="Wallender E.K."/>
            <person name="Wong C."/>
            <person name="Yamamura Y."/>
            <person name="Yuan S."/>
            <person name="Shinozaki K."/>
            <person name="Davis R.W."/>
            <person name="Theologis A."/>
            <person name="Ecker J.R."/>
        </authorList>
    </citation>
    <scope>NUCLEOTIDE SEQUENCE [LARGE SCALE MRNA]</scope>
    <source>
        <strain>cv. Columbia</strain>
    </source>
</reference>
<feature type="transit peptide" description="Chloroplast" evidence="2">
    <location>
        <begin position="1"/>
        <end position="71"/>
    </location>
</feature>
<feature type="chain" id="PRO_0000030438" description="6,7-dimethyl-8-ribityllumazine synthase, chloroplastic">
    <location>
        <begin position="72"/>
        <end position="227"/>
    </location>
</feature>
<feature type="active site" description="Proton donor" evidence="2">
    <location>
        <position position="160"/>
    </location>
</feature>
<feature type="binding site" evidence="1">
    <location>
        <position position="94"/>
    </location>
    <ligand>
        <name>5-amino-6-(D-ribitylamino)uracil</name>
        <dbReference type="ChEBI" id="CHEBI:15934"/>
    </ligand>
</feature>
<feature type="binding site" evidence="1">
    <location>
        <begin position="128"/>
        <end position="130"/>
    </location>
    <ligand>
        <name>5-amino-6-(D-ribitylamino)uracil</name>
        <dbReference type="ChEBI" id="CHEBI:15934"/>
    </ligand>
</feature>
<feature type="binding site" evidence="1">
    <location>
        <begin position="152"/>
        <end position="154"/>
    </location>
    <ligand>
        <name>5-amino-6-(D-ribitylamino)uracil</name>
        <dbReference type="ChEBI" id="CHEBI:15934"/>
    </ligand>
</feature>
<feature type="binding site" evidence="1">
    <location>
        <begin position="157"/>
        <end position="158"/>
    </location>
    <ligand>
        <name>(2S)-2-hydroxy-3-oxobutyl phosphate</name>
        <dbReference type="ChEBI" id="CHEBI:58830"/>
    </ligand>
</feature>
<feature type="binding site" evidence="1">
    <location>
        <position position="185"/>
    </location>
    <ligand>
        <name>5-amino-6-(D-ribitylamino)uracil</name>
        <dbReference type="ChEBI" id="CHEBI:15934"/>
    </ligand>
</feature>
<feature type="binding site" evidence="1">
    <location>
        <position position="199"/>
    </location>
    <ligand>
        <name>(2S)-2-hydroxy-3-oxobutyl phosphate</name>
        <dbReference type="ChEBI" id="CHEBI:58830"/>
    </ligand>
</feature>
<gene>
    <name type="ordered locus">At2g44050</name>
    <name type="ORF">F6E13.18</name>
</gene>
<organism>
    <name type="scientific">Arabidopsis thaliana</name>
    <name type="common">Mouse-ear cress</name>
    <dbReference type="NCBI Taxonomy" id="3702"/>
    <lineage>
        <taxon>Eukaryota</taxon>
        <taxon>Viridiplantae</taxon>
        <taxon>Streptophyta</taxon>
        <taxon>Embryophyta</taxon>
        <taxon>Tracheophyta</taxon>
        <taxon>Spermatophyta</taxon>
        <taxon>Magnoliopsida</taxon>
        <taxon>eudicotyledons</taxon>
        <taxon>Gunneridae</taxon>
        <taxon>Pentapetalae</taxon>
        <taxon>rosids</taxon>
        <taxon>malvids</taxon>
        <taxon>Brassicales</taxon>
        <taxon>Brassicaceae</taxon>
        <taxon>Camelineae</taxon>
        <taxon>Arabidopsis</taxon>
    </lineage>
</organism>
<name>RISB_ARATH</name>
<keyword id="KW-0150">Chloroplast</keyword>
<keyword id="KW-0934">Plastid</keyword>
<keyword id="KW-1185">Reference proteome</keyword>
<keyword id="KW-0686">Riboflavin biosynthesis</keyword>
<keyword id="KW-0808">Transferase</keyword>
<keyword id="KW-0809">Transit peptide</keyword>
<sequence length="227" mass="24024">MKSLASPPCLRLIPTAHRQLNSRQSSSACYIHGGSSVNKSNNLSFSSSTSGFASPLAVEKELRSSFVQTAAVRHVTGSLIRGEGLRFAIVVARFNEVVTKLLLEGAIETFKKYSVREEDIEVIWVPGSFEIGVVAQNLGKSGKFHAVLCIGAVIRGDTTHYDAVANSAASGVLSASINSGVPCIFGVLTCEDMDQALNRSGGKAGNKGAETALTALEMASLFEHHLK</sequence>
<protein>
    <recommendedName>
        <fullName>6,7-dimethyl-8-ribityllumazine synthase, chloroplastic</fullName>
        <shortName>DMRL synthase</shortName>
        <shortName>LS</shortName>
        <shortName>Lumazine synthase</shortName>
        <ecNumber>2.5.1.78</ecNumber>
    </recommendedName>
</protein>
<evidence type="ECO:0000250" key="1"/>
<evidence type="ECO:0000255" key="2"/>
<evidence type="ECO:0000305" key="3"/>
<proteinExistence type="evidence at protein level"/>